<keyword id="KW-0068">Autocatalytic cleavage</keyword>
<keyword id="KW-0227">DNA damage</keyword>
<keyword id="KW-0234">DNA repair</keyword>
<keyword id="KW-0235">DNA replication</keyword>
<keyword id="KW-0238">DNA-binding</keyword>
<keyword id="KW-0378">Hydrolase</keyword>
<keyword id="KW-1185">Reference proteome</keyword>
<keyword id="KW-0678">Repressor</keyword>
<keyword id="KW-0742">SOS response</keyword>
<keyword id="KW-0804">Transcription</keyword>
<keyword id="KW-0805">Transcription regulation</keyword>
<comment type="function">
    <text evidence="1">Represses a number of genes involved in the response to DNA damage (SOS response), including recA and lexA. In the presence of single-stranded DNA, RecA interacts with LexA causing an autocatalytic cleavage which disrupts the DNA-binding part of LexA, leading to derepression of the SOS regulon and eventually DNA repair.</text>
</comment>
<comment type="catalytic activity">
    <reaction evidence="1">
        <text>Hydrolysis of Ala-|-Gly bond in repressor LexA.</text>
        <dbReference type="EC" id="3.4.21.88"/>
    </reaction>
</comment>
<comment type="subunit">
    <text evidence="1">Homodimer.</text>
</comment>
<comment type="similarity">
    <text evidence="1">Belongs to the peptidase S24 family.</text>
</comment>
<protein>
    <recommendedName>
        <fullName evidence="1">LexA repressor</fullName>
        <ecNumber evidence="1">3.4.21.88</ecNumber>
    </recommendedName>
</protein>
<evidence type="ECO:0000255" key="1">
    <source>
        <dbReference type="HAMAP-Rule" id="MF_00015"/>
    </source>
</evidence>
<gene>
    <name evidence="1" type="primary">lexA</name>
    <name type="ordered locus">LAF_0708</name>
</gene>
<reference key="1">
    <citation type="journal article" date="2008" name="DNA Res.">
        <title>Comparative genome analysis of Lactobacillus reuteri and Lactobacillus fermentum reveal a genomic island for reuterin and cobalamin production.</title>
        <authorList>
            <person name="Morita H."/>
            <person name="Toh H."/>
            <person name="Fukuda S."/>
            <person name="Horikawa H."/>
            <person name="Oshima K."/>
            <person name="Suzuki T."/>
            <person name="Murakami M."/>
            <person name="Hisamatsu S."/>
            <person name="Kato Y."/>
            <person name="Takizawa T."/>
            <person name="Fukuoka H."/>
            <person name="Yoshimura T."/>
            <person name="Itoh K."/>
            <person name="O'Sullivan D.J."/>
            <person name="McKay L.L."/>
            <person name="Ohno H."/>
            <person name="Kikuchi J."/>
            <person name="Masaoka T."/>
            <person name="Hattori M."/>
        </authorList>
    </citation>
    <scope>NUCLEOTIDE SEQUENCE [LARGE SCALE GENOMIC DNA]</scope>
    <source>
        <strain>NBRC 3956 / LMG 18251</strain>
    </source>
</reference>
<dbReference type="EC" id="3.4.21.88" evidence="1"/>
<dbReference type="EMBL" id="AP008937">
    <property type="protein sequence ID" value="BAG27044.1"/>
    <property type="molecule type" value="Genomic_DNA"/>
</dbReference>
<dbReference type="RefSeq" id="WP_003685235.1">
    <property type="nucleotide sequence ID" value="NC_010610.1"/>
</dbReference>
<dbReference type="SMR" id="B2GBL2"/>
<dbReference type="MEROPS" id="S24.001"/>
<dbReference type="GeneID" id="83714922"/>
<dbReference type="KEGG" id="lfe:LAF_0708"/>
<dbReference type="eggNOG" id="COG1974">
    <property type="taxonomic scope" value="Bacteria"/>
</dbReference>
<dbReference type="HOGENOM" id="CLU_066192_45_1_9"/>
<dbReference type="Proteomes" id="UP000001697">
    <property type="component" value="Chromosome"/>
</dbReference>
<dbReference type="GO" id="GO:0003677">
    <property type="term" value="F:DNA binding"/>
    <property type="evidence" value="ECO:0007669"/>
    <property type="project" value="UniProtKB-UniRule"/>
</dbReference>
<dbReference type="GO" id="GO:0004252">
    <property type="term" value="F:serine-type endopeptidase activity"/>
    <property type="evidence" value="ECO:0007669"/>
    <property type="project" value="UniProtKB-UniRule"/>
</dbReference>
<dbReference type="GO" id="GO:0006281">
    <property type="term" value="P:DNA repair"/>
    <property type="evidence" value="ECO:0007669"/>
    <property type="project" value="UniProtKB-UniRule"/>
</dbReference>
<dbReference type="GO" id="GO:0006260">
    <property type="term" value="P:DNA replication"/>
    <property type="evidence" value="ECO:0007669"/>
    <property type="project" value="UniProtKB-UniRule"/>
</dbReference>
<dbReference type="GO" id="GO:0045892">
    <property type="term" value="P:negative regulation of DNA-templated transcription"/>
    <property type="evidence" value="ECO:0007669"/>
    <property type="project" value="UniProtKB-UniRule"/>
</dbReference>
<dbReference type="GO" id="GO:0006508">
    <property type="term" value="P:proteolysis"/>
    <property type="evidence" value="ECO:0007669"/>
    <property type="project" value="InterPro"/>
</dbReference>
<dbReference type="GO" id="GO:0009432">
    <property type="term" value="P:SOS response"/>
    <property type="evidence" value="ECO:0007669"/>
    <property type="project" value="UniProtKB-UniRule"/>
</dbReference>
<dbReference type="CDD" id="cd06529">
    <property type="entry name" value="S24_LexA-like"/>
    <property type="match status" value="1"/>
</dbReference>
<dbReference type="FunFam" id="2.10.109.10:FF:000001">
    <property type="entry name" value="LexA repressor"/>
    <property type="match status" value="1"/>
</dbReference>
<dbReference type="Gene3D" id="2.10.109.10">
    <property type="entry name" value="Umud Fragment, subunit A"/>
    <property type="match status" value="1"/>
</dbReference>
<dbReference type="Gene3D" id="1.10.10.10">
    <property type="entry name" value="Winged helix-like DNA-binding domain superfamily/Winged helix DNA-binding domain"/>
    <property type="match status" value="1"/>
</dbReference>
<dbReference type="HAMAP" id="MF_00015">
    <property type="entry name" value="LexA"/>
    <property type="match status" value="1"/>
</dbReference>
<dbReference type="InterPro" id="IPR006200">
    <property type="entry name" value="LexA"/>
</dbReference>
<dbReference type="InterPro" id="IPR039418">
    <property type="entry name" value="LexA-like"/>
</dbReference>
<dbReference type="InterPro" id="IPR036286">
    <property type="entry name" value="LexA/Signal_pep-like_sf"/>
</dbReference>
<dbReference type="InterPro" id="IPR006199">
    <property type="entry name" value="LexA_DNA-bd_dom"/>
</dbReference>
<dbReference type="InterPro" id="IPR050077">
    <property type="entry name" value="LexA_repressor"/>
</dbReference>
<dbReference type="InterPro" id="IPR006197">
    <property type="entry name" value="Peptidase_S24_LexA"/>
</dbReference>
<dbReference type="InterPro" id="IPR015927">
    <property type="entry name" value="Peptidase_S24_S26A/B/C"/>
</dbReference>
<dbReference type="InterPro" id="IPR036388">
    <property type="entry name" value="WH-like_DNA-bd_sf"/>
</dbReference>
<dbReference type="InterPro" id="IPR036390">
    <property type="entry name" value="WH_DNA-bd_sf"/>
</dbReference>
<dbReference type="NCBIfam" id="TIGR00498">
    <property type="entry name" value="lexA"/>
    <property type="match status" value="1"/>
</dbReference>
<dbReference type="PANTHER" id="PTHR33516">
    <property type="entry name" value="LEXA REPRESSOR"/>
    <property type="match status" value="1"/>
</dbReference>
<dbReference type="PANTHER" id="PTHR33516:SF2">
    <property type="entry name" value="LEXA REPRESSOR-RELATED"/>
    <property type="match status" value="1"/>
</dbReference>
<dbReference type="Pfam" id="PF01726">
    <property type="entry name" value="LexA_DNA_bind"/>
    <property type="match status" value="1"/>
</dbReference>
<dbReference type="Pfam" id="PF00717">
    <property type="entry name" value="Peptidase_S24"/>
    <property type="match status" value="1"/>
</dbReference>
<dbReference type="PRINTS" id="PR00726">
    <property type="entry name" value="LEXASERPTASE"/>
</dbReference>
<dbReference type="SUPFAM" id="SSF51306">
    <property type="entry name" value="LexA/Signal peptidase"/>
    <property type="match status" value="1"/>
</dbReference>
<dbReference type="SUPFAM" id="SSF46785">
    <property type="entry name" value="Winged helix' DNA-binding domain"/>
    <property type="match status" value="1"/>
</dbReference>
<sequence>MPRNSTNKQMAVLSFIHKQVDAHGYPPTVREICGAVGLSSTSTVHGHINRLIKKGYLKKDPSKPRALEITPAGLEVLGITPKQTQIPLLGVVAAGEPILAVQDATDFFPIPPSIPDHDDLFMLTIQGTSMINIGILNGDKVIVRRQETANNGDIVIAMTSDNEATCKRFFKEQGHIRLQPENDTLAPIILDDVTILGKVVGLFRDDIF</sequence>
<accession>B2GBL2</accession>
<feature type="chain" id="PRO_1000089572" description="LexA repressor">
    <location>
        <begin position="1"/>
        <end position="208"/>
    </location>
</feature>
<feature type="DNA-binding region" description="H-T-H motif" evidence="1">
    <location>
        <begin position="29"/>
        <end position="49"/>
    </location>
</feature>
<feature type="active site" description="For autocatalytic cleavage activity" evidence="1">
    <location>
        <position position="129"/>
    </location>
</feature>
<feature type="active site" description="For autocatalytic cleavage activity" evidence="1">
    <location>
        <position position="167"/>
    </location>
</feature>
<feature type="site" description="Cleavage; by autolysis" evidence="1">
    <location>
        <begin position="94"/>
        <end position="95"/>
    </location>
</feature>
<proteinExistence type="inferred from homology"/>
<organism>
    <name type="scientific">Limosilactobacillus fermentum (strain NBRC 3956 / LMG 18251)</name>
    <name type="common">Lactobacillus fermentum</name>
    <dbReference type="NCBI Taxonomy" id="334390"/>
    <lineage>
        <taxon>Bacteria</taxon>
        <taxon>Bacillati</taxon>
        <taxon>Bacillota</taxon>
        <taxon>Bacilli</taxon>
        <taxon>Lactobacillales</taxon>
        <taxon>Lactobacillaceae</taxon>
        <taxon>Limosilactobacillus</taxon>
    </lineage>
</organism>
<name>LEXA_LIMF3</name>